<sequence length="312" mass="34450">MSSLRTADDTWDIATSVGSTAVMVAASRAAETERDEALIRDPYARLLVTGAGTGIWESVLDAKFVETVAAADAEAAAIFEHMNSYQAVRTHFFDAFFTAAAEAGIRQIVILASGLDSRAYRLDWPSGTTVYEIDQPKVLEYKSATLAEHGVEPVATRREVGIDLRHDWPAALRGAGFDPSRPTAWLAEGLLMYLPADAQDRLFEQITELSAPGSRVAAETAGVQAEDRRQQMRERFERIAEKFDMTASLDIQQLIYEDPDRADVADWLDAHGWTATAVSSQQEMRRLDRWALPADLTDDDAFSNFVTAEKLS</sequence>
<reference key="1">
    <citation type="submission" date="2007-02" db="EMBL/GenBank/DDBJ databases">
        <title>Complete sequence of Mycobacterium sp. JLS.</title>
        <authorList>
            <consortium name="US DOE Joint Genome Institute"/>
            <person name="Copeland A."/>
            <person name="Lucas S."/>
            <person name="Lapidus A."/>
            <person name="Barry K."/>
            <person name="Detter J.C."/>
            <person name="Glavina del Rio T."/>
            <person name="Hammon N."/>
            <person name="Israni S."/>
            <person name="Dalin E."/>
            <person name="Tice H."/>
            <person name="Pitluck S."/>
            <person name="Chain P."/>
            <person name="Malfatti S."/>
            <person name="Shin M."/>
            <person name="Vergez L."/>
            <person name="Schmutz J."/>
            <person name="Larimer F."/>
            <person name="Land M."/>
            <person name="Hauser L."/>
            <person name="Kyrpides N."/>
            <person name="Mikhailova N."/>
            <person name="Miller C.D."/>
            <person name="Anderson A.J."/>
            <person name="Sims R.C."/>
            <person name="Richardson P."/>
        </authorList>
    </citation>
    <scope>NUCLEOTIDE SEQUENCE [LARGE SCALE GENOMIC DNA]</scope>
    <source>
        <strain>JLS</strain>
    </source>
</reference>
<accession>A3PSL4</accession>
<gene>
    <name type="ordered locus">Mjls_0078</name>
</gene>
<keyword id="KW-0489">Methyltransferase</keyword>
<keyword id="KW-0949">S-adenosyl-L-methionine</keyword>
<keyword id="KW-0808">Transferase</keyword>
<organism>
    <name type="scientific">Mycobacterium sp. (strain JLS)</name>
    <dbReference type="NCBI Taxonomy" id="164757"/>
    <lineage>
        <taxon>Bacteria</taxon>
        <taxon>Bacillati</taxon>
        <taxon>Actinomycetota</taxon>
        <taxon>Actinomycetes</taxon>
        <taxon>Mycobacteriales</taxon>
        <taxon>Mycobacteriaceae</taxon>
        <taxon>Mycobacterium</taxon>
    </lineage>
</organism>
<feature type="chain" id="PRO_0000361201" description="Putative S-adenosyl-L-methionine-dependent methyltransferase Mjls_0078">
    <location>
        <begin position="1"/>
        <end position="312"/>
    </location>
</feature>
<feature type="binding site" evidence="1">
    <location>
        <position position="134"/>
    </location>
    <ligand>
        <name>S-adenosyl-L-methionine</name>
        <dbReference type="ChEBI" id="CHEBI:59789"/>
    </ligand>
</feature>
<feature type="binding site" evidence="1">
    <location>
        <begin position="163"/>
        <end position="164"/>
    </location>
    <ligand>
        <name>S-adenosyl-L-methionine</name>
        <dbReference type="ChEBI" id="CHEBI:59789"/>
    </ligand>
</feature>
<evidence type="ECO:0000250" key="1"/>
<evidence type="ECO:0000305" key="2"/>
<comment type="function">
    <text evidence="1">Exhibits S-adenosyl-L-methionine-dependent methyltransferase activity.</text>
</comment>
<comment type="similarity">
    <text evidence="2">Belongs to the UPF0677 family.</text>
</comment>
<dbReference type="EC" id="2.1.1.-"/>
<dbReference type="EMBL" id="CP000580">
    <property type="protein sequence ID" value="ABN95891.1"/>
    <property type="molecule type" value="Genomic_DNA"/>
</dbReference>
<dbReference type="SMR" id="A3PSL4"/>
<dbReference type="KEGG" id="mjl:Mjls_0078"/>
<dbReference type="HOGENOM" id="CLU_056160_2_1_11"/>
<dbReference type="BioCyc" id="MSP164757:G1G8C-83-MONOMER"/>
<dbReference type="GO" id="GO:0008168">
    <property type="term" value="F:methyltransferase activity"/>
    <property type="evidence" value="ECO:0007669"/>
    <property type="project" value="UniProtKB-KW"/>
</dbReference>
<dbReference type="GO" id="GO:0032259">
    <property type="term" value="P:methylation"/>
    <property type="evidence" value="ECO:0007669"/>
    <property type="project" value="UniProtKB-KW"/>
</dbReference>
<dbReference type="FunFam" id="3.40.50.150:FF:000152">
    <property type="entry name" value="S-adenosyl-L-methionine-dependent methyltransferase"/>
    <property type="match status" value="1"/>
</dbReference>
<dbReference type="Gene3D" id="3.40.50.150">
    <property type="entry name" value="Vaccinia Virus protein VP39"/>
    <property type="match status" value="1"/>
</dbReference>
<dbReference type="InterPro" id="IPR007213">
    <property type="entry name" value="Ppm1/Ppm2/Tcmp"/>
</dbReference>
<dbReference type="InterPro" id="IPR029063">
    <property type="entry name" value="SAM-dependent_MTases_sf"/>
</dbReference>
<dbReference type="InterPro" id="IPR011610">
    <property type="entry name" value="SAM_mthyl_Trfase_ML2640-like"/>
</dbReference>
<dbReference type="NCBIfam" id="TIGR00027">
    <property type="entry name" value="mthyl_TIGR00027"/>
    <property type="match status" value="1"/>
</dbReference>
<dbReference type="PANTHER" id="PTHR43619">
    <property type="entry name" value="S-ADENOSYL-L-METHIONINE-DEPENDENT METHYLTRANSFERASE YKTD-RELATED"/>
    <property type="match status" value="1"/>
</dbReference>
<dbReference type="PANTHER" id="PTHR43619:SF2">
    <property type="entry name" value="S-ADENOSYL-L-METHIONINE-DEPENDENT METHYLTRANSFERASES SUPERFAMILY PROTEIN"/>
    <property type="match status" value="1"/>
</dbReference>
<dbReference type="Pfam" id="PF04072">
    <property type="entry name" value="LCM"/>
    <property type="match status" value="1"/>
</dbReference>
<dbReference type="SUPFAM" id="SSF53335">
    <property type="entry name" value="S-adenosyl-L-methionine-dependent methyltransferases"/>
    <property type="match status" value="1"/>
</dbReference>
<name>Y078_MYCSJ</name>
<protein>
    <recommendedName>
        <fullName>Putative S-adenosyl-L-methionine-dependent methyltransferase Mjls_0078</fullName>
        <ecNumber>2.1.1.-</ecNumber>
    </recommendedName>
</protein>
<proteinExistence type="inferred from homology"/>